<evidence type="ECO:0000255" key="1">
    <source>
        <dbReference type="HAMAP-Rule" id="MF_00367"/>
    </source>
</evidence>
<evidence type="ECO:0000255" key="2">
    <source>
        <dbReference type="PROSITE-ProRule" id="PRU01050"/>
    </source>
</evidence>
<keyword id="KW-0997">Cell inner membrane</keyword>
<keyword id="KW-1003">Cell membrane</keyword>
<keyword id="KW-0963">Cytoplasm</keyword>
<keyword id="KW-0342">GTP-binding</keyword>
<keyword id="KW-0472">Membrane</keyword>
<keyword id="KW-0547">Nucleotide-binding</keyword>
<keyword id="KW-1185">Reference proteome</keyword>
<keyword id="KW-0690">Ribosome biogenesis</keyword>
<keyword id="KW-0694">RNA-binding</keyword>
<keyword id="KW-0699">rRNA-binding</keyword>
<organism>
    <name type="scientific">Campylobacter lari (strain RM2100 / D67 / ATCC BAA-1060)</name>
    <dbReference type="NCBI Taxonomy" id="306263"/>
    <lineage>
        <taxon>Bacteria</taxon>
        <taxon>Pseudomonadati</taxon>
        <taxon>Campylobacterota</taxon>
        <taxon>Epsilonproteobacteria</taxon>
        <taxon>Campylobacterales</taxon>
        <taxon>Campylobacteraceae</taxon>
        <taxon>Campylobacter</taxon>
    </lineage>
</organism>
<proteinExistence type="inferred from homology"/>
<dbReference type="EMBL" id="CP000932">
    <property type="protein sequence ID" value="ACM64086.1"/>
    <property type="molecule type" value="Genomic_DNA"/>
</dbReference>
<dbReference type="RefSeq" id="WP_012661469.1">
    <property type="nucleotide sequence ID" value="NC_012039.1"/>
</dbReference>
<dbReference type="SMR" id="B9KGA1"/>
<dbReference type="STRING" id="306263.Cla_0758"/>
<dbReference type="KEGG" id="cla:CLA_0758"/>
<dbReference type="PATRIC" id="fig|306263.5.peg.738"/>
<dbReference type="eggNOG" id="COG1159">
    <property type="taxonomic scope" value="Bacteria"/>
</dbReference>
<dbReference type="HOGENOM" id="CLU_038009_1_0_7"/>
<dbReference type="Proteomes" id="UP000007727">
    <property type="component" value="Chromosome"/>
</dbReference>
<dbReference type="GO" id="GO:0005829">
    <property type="term" value="C:cytosol"/>
    <property type="evidence" value="ECO:0007669"/>
    <property type="project" value="TreeGrafter"/>
</dbReference>
<dbReference type="GO" id="GO:0005886">
    <property type="term" value="C:plasma membrane"/>
    <property type="evidence" value="ECO:0007669"/>
    <property type="project" value="UniProtKB-SubCell"/>
</dbReference>
<dbReference type="GO" id="GO:0005525">
    <property type="term" value="F:GTP binding"/>
    <property type="evidence" value="ECO:0007669"/>
    <property type="project" value="UniProtKB-UniRule"/>
</dbReference>
<dbReference type="GO" id="GO:0003924">
    <property type="term" value="F:GTPase activity"/>
    <property type="evidence" value="ECO:0007669"/>
    <property type="project" value="UniProtKB-UniRule"/>
</dbReference>
<dbReference type="GO" id="GO:0043024">
    <property type="term" value="F:ribosomal small subunit binding"/>
    <property type="evidence" value="ECO:0007669"/>
    <property type="project" value="TreeGrafter"/>
</dbReference>
<dbReference type="GO" id="GO:0070181">
    <property type="term" value="F:small ribosomal subunit rRNA binding"/>
    <property type="evidence" value="ECO:0007669"/>
    <property type="project" value="UniProtKB-UniRule"/>
</dbReference>
<dbReference type="GO" id="GO:0000028">
    <property type="term" value="P:ribosomal small subunit assembly"/>
    <property type="evidence" value="ECO:0007669"/>
    <property type="project" value="TreeGrafter"/>
</dbReference>
<dbReference type="CDD" id="cd04163">
    <property type="entry name" value="Era"/>
    <property type="match status" value="1"/>
</dbReference>
<dbReference type="CDD" id="cd22534">
    <property type="entry name" value="KH-II_Era"/>
    <property type="match status" value="1"/>
</dbReference>
<dbReference type="Gene3D" id="3.30.300.20">
    <property type="match status" value="1"/>
</dbReference>
<dbReference type="Gene3D" id="3.40.50.300">
    <property type="entry name" value="P-loop containing nucleotide triphosphate hydrolases"/>
    <property type="match status" value="1"/>
</dbReference>
<dbReference type="HAMAP" id="MF_00367">
    <property type="entry name" value="GTPase_Era"/>
    <property type="match status" value="1"/>
</dbReference>
<dbReference type="InterPro" id="IPR030388">
    <property type="entry name" value="G_ERA_dom"/>
</dbReference>
<dbReference type="InterPro" id="IPR006073">
    <property type="entry name" value="GTP-bd"/>
</dbReference>
<dbReference type="InterPro" id="IPR005662">
    <property type="entry name" value="GTPase_Era-like"/>
</dbReference>
<dbReference type="InterPro" id="IPR015946">
    <property type="entry name" value="KH_dom-like_a/b"/>
</dbReference>
<dbReference type="InterPro" id="IPR004044">
    <property type="entry name" value="KH_dom_type_2"/>
</dbReference>
<dbReference type="InterPro" id="IPR009019">
    <property type="entry name" value="KH_sf_prok-type"/>
</dbReference>
<dbReference type="InterPro" id="IPR027417">
    <property type="entry name" value="P-loop_NTPase"/>
</dbReference>
<dbReference type="InterPro" id="IPR005225">
    <property type="entry name" value="Small_GTP-bd"/>
</dbReference>
<dbReference type="NCBIfam" id="TIGR00436">
    <property type="entry name" value="era"/>
    <property type="match status" value="1"/>
</dbReference>
<dbReference type="NCBIfam" id="NF000908">
    <property type="entry name" value="PRK00089.1"/>
    <property type="match status" value="1"/>
</dbReference>
<dbReference type="NCBIfam" id="TIGR00231">
    <property type="entry name" value="small_GTP"/>
    <property type="match status" value="1"/>
</dbReference>
<dbReference type="PANTHER" id="PTHR42698">
    <property type="entry name" value="GTPASE ERA"/>
    <property type="match status" value="1"/>
</dbReference>
<dbReference type="PANTHER" id="PTHR42698:SF1">
    <property type="entry name" value="GTPASE ERA, MITOCHONDRIAL"/>
    <property type="match status" value="1"/>
</dbReference>
<dbReference type="Pfam" id="PF07650">
    <property type="entry name" value="KH_2"/>
    <property type="match status" value="1"/>
</dbReference>
<dbReference type="Pfam" id="PF01926">
    <property type="entry name" value="MMR_HSR1"/>
    <property type="match status" value="1"/>
</dbReference>
<dbReference type="SUPFAM" id="SSF52540">
    <property type="entry name" value="P-loop containing nucleoside triphosphate hydrolases"/>
    <property type="match status" value="1"/>
</dbReference>
<dbReference type="SUPFAM" id="SSF54814">
    <property type="entry name" value="Prokaryotic type KH domain (KH-domain type II)"/>
    <property type="match status" value="1"/>
</dbReference>
<dbReference type="PROSITE" id="PS51713">
    <property type="entry name" value="G_ERA"/>
    <property type="match status" value="1"/>
</dbReference>
<dbReference type="PROSITE" id="PS50823">
    <property type="entry name" value="KH_TYPE_2"/>
    <property type="match status" value="1"/>
</dbReference>
<accession>B9KGA1</accession>
<sequence length="290" mass="33443">MKSGFVSIVGRTNAGKSSILNSLLEEKIAMVSHKQNATRRKINAIIMHEKNQVIFIDTPGLHASSKAINQLMIDLAIKSIADCDVILFVASIYDDIIDYENFLKLNPKVPHIVLINKVDLADKKTLLSKLAQYNQFSSYFSAIIPYSIKQKFHKKILLDELVKYLPEHPYYFDPEFITTTNEKDIYRDFILEAIYENLSDEIPYTTEVRIDKIKELKTIYYINATIISSTNSHKGMILGKDGATIKRIGKEARVKIEKLAQKKVMLKLFVQLEKNWHKNEQNLKKILYDE</sequence>
<reference key="1">
    <citation type="journal article" date="2008" name="Foodborne Pathog. Dis.">
        <title>The complete genome sequence and analysis of the human pathogen Campylobacter lari.</title>
        <authorList>
            <person name="Miller W.G."/>
            <person name="Wang G."/>
            <person name="Binnewies T.T."/>
            <person name="Parker C.T."/>
        </authorList>
    </citation>
    <scope>NUCLEOTIDE SEQUENCE [LARGE SCALE GENOMIC DNA]</scope>
    <source>
        <strain>RM2100 / D67 / ATCC BAA-1060</strain>
    </source>
</reference>
<feature type="chain" id="PRO_1000133768" description="GTPase Era">
    <location>
        <begin position="1"/>
        <end position="290"/>
    </location>
</feature>
<feature type="domain" description="Era-type G" evidence="2">
    <location>
        <begin position="2"/>
        <end position="167"/>
    </location>
</feature>
<feature type="domain" description="KH type-2" evidence="1">
    <location>
        <begin position="194"/>
        <end position="274"/>
    </location>
</feature>
<feature type="region of interest" description="G1" evidence="2">
    <location>
        <begin position="10"/>
        <end position="17"/>
    </location>
</feature>
<feature type="region of interest" description="G2" evidence="2">
    <location>
        <begin position="36"/>
        <end position="40"/>
    </location>
</feature>
<feature type="region of interest" description="G3" evidence="2">
    <location>
        <begin position="57"/>
        <end position="60"/>
    </location>
</feature>
<feature type="region of interest" description="G4" evidence="2">
    <location>
        <begin position="116"/>
        <end position="119"/>
    </location>
</feature>
<feature type="region of interest" description="G5" evidence="2">
    <location>
        <begin position="146"/>
        <end position="148"/>
    </location>
</feature>
<feature type="binding site" evidence="1">
    <location>
        <begin position="10"/>
        <end position="17"/>
    </location>
    <ligand>
        <name>GTP</name>
        <dbReference type="ChEBI" id="CHEBI:37565"/>
    </ligand>
</feature>
<feature type="binding site" evidence="1">
    <location>
        <begin position="57"/>
        <end position="61"/>
    </location>
    <ligand>
        <name>GTP</name>
        <dbReference type="ChEBI" id="CHEBI:37565"/>
    </ligand>
</feature>
<feature type="binding site" evidence="1">
    <location>
        <begin position="116"/>
        <end position="119"/>
    </location>
    <ligand>
        <name>GTP</name>
        <dbReference type="ChEBI" id="CHEBI:37565"/>
    </ligand>
</feature>
<gene>
    <name evidence="1" type="primary">era</name>
    <name type="ordered locus">Cla_0758</name>
</gene>
<protein>
    <recommendedName>
        <fullName evidence="1">GTPase Era</fullName>
    </recommendedName>
</protein>
<name>ERA_CAMLR</name>
<comment type="function">
    <text evidence="1">An essential GTPase that binds both GDP and GTP, with rapid nucleotide exchange. Plays a role in 16S rRNA processing and 30S ribosomal subunit biogenesis and possibly also in cell cycle regulation and energy metabolism.</text>
</comment>
<comment type="subunit">
    <text evidence="1">Monomer.</text>
</comment>
<comment type="subcellular location">
    <subcellularLocation>
        <location>Cytoplasm</location>
    </subcellularLocation>
    <subcellularLocation>
        <location evidence="1">Cell inner membrane</location>
        <topology evidence="1">Peripheral membrane protein</topology>
    </subcellularLocation>
</comment>
<comment type="similarity">
    <text evidence="1 2">Belongs to the TRAFAC class TrmE-Era-EngA-EngB-Septin-like GTPase superfamily. Era GTPase family.</text>
</comment>